<name>ISPF_NITOC</name>
<proteinExistence type="inferred from homology"/>
<keyword id="KW-0414">Isoprene biosynthesis</keyword>
<keyword id="KW-0456">Lyase</keyword>
<keyword id="KW-0479">Metal-binding</keyword>
<keyword id="KW-1185">Reference proteome</keyword>
<feature type="chain" id="PRO_0000237736" description="2-C-methyl-D-erythritol 2,4-cyclodiphosphate synthase">
    <location>
        <begin position="1"/>
        <end position="158"/>
    </location>
</feature>
<feature type="binding site" evidence="1">
    <location>
        <begin position="8"/>
        <end position="10"/>
    </location>
    <ligand>
        <name>4-CDP-2-C-methyl-D-erythritol 2-phosphate</name>
        <dbReference type="ChEBI" id="CHEBI:57919"/>
    </ligand>
</feature>
<feature type="binding site" evidence="1">
    <location>
        <position position="8"/>
    </location>
    <ligand>
        <name>a divalent metal cation</name>
        <dbReference type="ChEBI" id="CHEBI:60240"/>
    </ligand>
</feature>
<feature type="binding site" evidence="1">
    <location>
        <position position="10"/>
    </location>
    <ligand>
        <name>a divalent metal cation</name>
        <dbReference type="ChEBI" id="CHEBI:60240"/>
    </ligand>
</feature>
<feature type="binding site" evidence="1">
    <location>
        <begin position="34"/>
        <end position="35"/>
    </location>
    <ligand>
        <name>4-CDP-2-C-methyl-D-erythritol 2-phosphate</name>
        <dbReference type="ChEBI" id="CHEBI:57919"/>
    </ligand>
</feature>
<feature type="binding site" evidence="1">
    <location>
        <position position="42"/>
    </location>
    <ligand>
        <name>a divalent metal cation</name>
        <dbReference type="ChEBI" id="CHEBI:60240"/>
    </ligand>
</feature>
<feature type="binding site" evidence="1">
    <location>
        <begin position="56"/>
        <end position="58"/>
    </location>
    <ligand>
        <name>4-CDP-2-C-methyl-D-erythritol 2-phosphate</name>
        <dbReference type="ChEBI" id="CHEBI:57919"/>
    </ligand>
</feature>
<feature type="binding site" evidence="1">
    <location>
        <begin position="132"/>
        <end position="135"/>
    </location>
    <ligand>
        <name>4-CDP-2-C-methyl-D-erythritol 2-phosphate</name>
        <dbReference type="ChEBI" id="CHEBI:57919"/>
    </ligand>
</feature>
<feature type="binding site" evidence="1">
    <location>
        <position position="142"/>
    </location>
    <ligand>
        <name>4-CDP-2-C-methyl-D-erythritol 2-phosphate</name>
        <dbReference type="ChEBI" id="CHEBI:57919"/>
    </ligand>
</feature>
<feature type="site" description="Transition state stabilizer" evidence="1">
    <location>
        <position position="34"/>
    </location>
</feature>
<feature type="site" description="Transition state stabilizer" evidence="1">
    <location>
        <position position="133"/>
    </location>
</feature>
<accession>Q3JCS8</accession>
<dbReference type="EC" id="4.6.1.12" evidence="1"/>
<dbReference type="EMBL" id="CP000127">
    <property type="protein sequence ID" value="ABA57368.1"/>
    <property type="molecule type" value="Genomic_DNA"/>
</dbReference>
<dbReference type="RefSeq" id="WP_002809892.1">
    <property type="nucleotide sequence ID" value="NC_007484.1"/>
</dbReference>
<dbReference type="SMR" id="Q3JCS8"/>
<dbReference type="FunCoup" id="Q3JCS8">
    <property type="interactions" value="388"/>
</dbReference>
<dbReference type="STRING" id="323261.Noc_0855"/>
<dbReference type="KEGG" id="noc:Noc_0855"/>
<dbReference type="eggNOG" id="COG0245">
    <property type="taxonomic scope" value="Bacteria"/>
</dbReference>
<dbReference type="HOGENOM" id="CLU_084630_2_0_6"/>
<dbReference type="InParanoid" id="Q3JCS8"/>
<dbReference type="UniPathway" id="UPA00056">
    <property type="reaction ID" value="UER00095"/>
</dbReference>
<dbReference type="Proteomes" id="UP000006838">
    <property type="component" value="Chromosome"/>
</dbReference>
<dbReference type="GO" id="GO:0008685">
    <property type="term" value="F:2-C-methyl-D-erythritol 2,4-cyclodiphosphate synthase activity"/>
    <property type="evidence" value="ECO:0007669"/>
    <property type="project" value="UniProtKB-UniRule"/>
</dbReference>
<dbReference type="GO" id="GO:0046872">
    <property type="term" value="F:metal ion binding"/>
    <property type="evidence" value="ECO:0007669"/>
    <property type="project" value="UniProtKB-KW"/>
</dbReference>
<dbReference type="GO" id="GO:0019288">
    <property type="term" value="P:isopentenyl diphosphate biosynthetic process, methylerythritol 4-phosphate pathway"/>
    <property type="evidence" value="ECO:0007669"/>
    <property type="project" value="UniProtKB-UniRule"/>
</dbReference>
<dbReference type="GO" id="GO:0016114">
    <property type="term" value="P:terpenoid biosynthetic process"/>
    <property type="evidence" value="ECO:0007669"/>
    <property type="project" value="InterPro"/>
</dbReference>
<dbReference type="CDD" id="cd00554">
    <property type="entry name" value="MECDP_synthase"/>
    <property type="match status" value="1"/>
</dbReference>
<dbReference type="FunFam" id="3.30.1330.50:FF:000001">
    <property type="entry name" value="2-C-methyl-D-erythritol 2,4-cyclodiphosphate synthase"/>
    <property type="match status" value="1"/>
</dbReference>
<dbReference type="Gene3D" id="3.30.1330.50">
    <property type="entry name" value="2-C-methyl-D-erythritol 2,4-cyclodiphosphate synthase"/>
    <property type="match status" value="1"/>
</dbReference>
<dbReference type="HAMAP" id="MF_00107">
    <property type="entry name" value="IspF"/>
    <property type="match status" value="1"/>
</dbReference>
<dbReference type="InterPro" id="IPR003526">
    <property type="entry name" value="MECDP_synthase"/>
</dbReference>
<dbReference type="InterPro" id="IPR020555">
    <property type="entry name" value="MECDP_synthase_CS"/>
</dbReference>
<dbReference type="InterPro" id="IPR036571">
    <property type="entry name" value="MECDP_synthase_sf"/>
</dbReference>
<dbReference type="NCBIfam" id="TIGR00151">
    <property type="entry name" value="ispF"/>
    <property type="match status" value="1"/>
</dbReference>
<dbReference type="PANTHER" id="PTHR43181">
    <property type="entry name" value="2-C-METHYL-D-ERYTHRITOL 2,4-CYCLODIPHOSPHATE SYNTHASE, CHLOROPLASTIC"/>
    <property type="match status" value="1"/>
</dbReference>
<dbReference type="PANTHER" id="PTHR43181:SF1">
    <property type="entry name" value="2-C-METHYL-D-ERYTHRITOL 2,4-CYCLODIPHOSPHATE SYNTHASE, CHLOROPLASTIC"/>
    <property type="match status" value="1"/>
</dbReference>
<dbReference type="Pfam" id="PF02542">
    <property type="entry name" value="YgbB"/>
    <property type="match status" value="1"/>
</dbReference>
<dbReference type="SUPFAM" id="SSF69765">
    <property type="entry name" value="IpsF-like"/>
    <property type="match status" value="1"/>
</dbReference>
<dbReference type="PROSITE" id="PS01350">
    <property type="entry name" value="ISPF"/>
    <property type="match status" value="1"/>
</dbReference>
<gene>
    <name evidence="1" type="primary">ispF</name>
    <name type="ordered locus">Noc_0855</name>
</gene>
<reference key="1">
    <citation type="journal article" date="2006" name="Appl. Environ. Microbiol.">
        <title>Complete genome sequence of the marine, chemolithoautotrophic, ammonia-oxidizing bacterium Nitrosococcus oceani ATCC 19707.</title>
        <authorList>
            <person name="Klotz M.G."/>
            <person name="Arp D.J."/>
            <person name="Chain P.S.G."/>
            <person name="El-Sheikh A.F."/>
            <person name="Hauser L.J."/>
            <person name="Hommes N.G."/>
            <person name="Larimer F.W."/>
            <person name="Malfatti S.A."/>
            <person name="Norton J.M."/>
            <person name="Poret-Peterson A.T."/>
            <person name="Vergez L.M."/>
            <person name="Ward B.B."/>
        </authorList>
    </citation>
    <scope>NUCLEOTIDE SEQUENCE [LARGE SCALE GENOMIC DNA]</scope>
    <source>
        <strain>ATCC 19707 / BCRC 17464 / JCM 30415 / NCIMB 11848 / C-107</strain>
    </source>
</reference>
<evidence type="ECO:0000255" key="1">
    <source>
        <dbReference type="HAMAP-Rule" id="MF_00107"/>
    </source>
</evidence>
<protein>
    <recommendedName>
        <fullName evidence="1">2-C-methyl-D-erythritol 2,4-cyclodiphosphate synthase</fullName>
        <shortName evidence="1">MECDP-synthase</shortName>
        <shortName evidence="1">MECPP-synthase</shortName>
        <shortName evidence="1">MECPS</shortName>
        <ecNumber evidence="1">4.6.1.12</ecNumber>
    </recommendedName>
</protein>
<comment type="function">
    <text evidence="1">Involved in the biosynthesis of isopentenyl diphosphate (IPP) and dimethylallyl diphosphate (DMAPP), two major building blocks of isoprenoid compounds. Catalyzes the conversion of 4-diphosphocytidyl-2-C-methyl-D-erythritol 2-phosphate (CDP-ME2P) to 2-C-methyl-D-erythritol 2,4-cyclodiphosphate (ME-CPP) with a corresponding release of cytidine 5-monophosphate (CMP).</text>
</comment>
<comment type="catalytic activity">
    <reaction evidence="1">
        <text>4-CDP-2-C-methyl-D-erythritol 2-phosphate = 2-C-methyl-D-erythritol 2,4-cyclic diphosphate + CMP</text>
        <dbReference type="Rhea" id="RHEA:23864"/>
        <dbReference type="ChEBI" id="CHEBI:57919"/>
        <dbReference type="ChEBI" id="CHEBI:58483"/>
        <dbReference type="ChEBI" id="CHEBI:60377"/>
        <dbReference type="EC" id="4.6.1.12"/>
    </reaction>
</comment>
<comment type="cofactor">
    <cofactor evidence="1">
        <name>a divalent metal cation</name>
        <dbReference type="ChEBI" id="CHEBI:60240"/>
    </cofactor>
    <text evidence="1">Binds 1 divalent metal cation per subunit.</text>
</comment>
<comment type="pathway">
    <text evidence="1">Isoprenoid biosynthesis; isopentenyl diphosphate biosynthesis via DXP pathway; isopentenyl diphosphate from 1-deoxy-D-xylulose 5-phosphate: step 4/6.</text>
</comment>
<comment type="subunit">
    <text evidence="1">Homotrimer.</text>
</comment>
<comment type="similarity">
    <text evidence="1">Belongs to the IspF family.</text>
</comment>
<organism>
    <name type="scientific">Nitrosococcus oceani (strain ATCC 19707 / BCRC 17464 / JCM 30415 / NCIMB 11848 / C-107)</name>
    <dbReference type="NCBI Taxonomy" id="323261"/>
    <lineage>
        <taxon>Bacteria</taxon>
        <taxon>Pseudomonadati</taxon>
        <taxon>Pseudomonadota</taxon>
        <taxon>Gammaproteobacteria</taxon>
        <taxon>Chromatiales</taxon>
        <taxon>Chromatiaceae</taxon>
        <taxon>Nitrosococcus</taxon>
    </lineage>
</organism>
<sequence length="158" mass="16993">MRIGHGFDAHRFGSTGKLILGGVEIPHEQGLIAHSDGDVVIHALCDALLGGAALGDIGRHFPDTSAEFKNADSQKLLHRVMVLLKEHGFKVSNGDMTIIAQIPKLAPYLPAMRETLALALGLPLQRFNIKATTTERMGYIGRAEGIAAHAVVLLLEEQ</sequence>